<evidence type="ECO:0000250" key="1">
    <source>
        <dbReference type="UniProtKB" id="P10906"/>
    </source>
</evidence>
<evidence type="ECO:0000255" key="2"/>
<evidence type="ECO:0000255" key="3">
    <source>
        <dbReference type="PROSITE-ProRule" id="PRU00441"/>
    </source>
</evidence>
<evidence type="ECO:0000305" key="4"/>
<feature type="chain" id="PRO_0000292686" description="sn-glycerol-3-phosphate transport system permease protein UgpE">
    <location>
        <begin position="1"/>
        <end position="281"/>
    </location>
</feature>
<feature type="transmembrane region" description="Helical" evidence="3">
    <location>
        <begin position="16"/>
        <end position="36"/>
    </location>
</feature>
<feature type="transmembrane region" description="Helical" evidence="3">
    <location>
        <begin position="85"/>
        <end position="105"/>
    </location>
</feature>
<feature type="transmembrane region" description="Helical" evidence="3">
    <location>
        <begin position="113"/>
        <end position="133"/>
    </location>
</feature>
<feature type="transmembrane region" description="Helical" evidence="3">
    <location>
        <begin position="142"/>
        <end position="162"/>
    </location>
</feature>
<feature type="transmembrane region" description="Helical" evidence="3">
    <location>
        <begin position="202"/>
        <end position="222"/>
    </location>
</feature>
<feature type="transmembrane region" description="Helical" evidence="3">
    <location>
        <begin position="247"/>
        <end position="267"/>
    </location>
</feature>
<feature type="domain" description="ABC transmembrane type-1" evidence="3">
    <location>
        <begin position="77"/>
        <end position="268"/>
    </location>
</feature>
<comment type="function">
    <text evidence="1">Part of the ABC transporter complex UgpBAEC involved in sn-glycerol-3-phosphate (G3P) import. Probably responsible for the translocation of the substrate across the membrane.</text>
</comment>
<comment type="subunit">
    <text evidence="1">The complex is composed of two ATP-binding proteins (UgpC), two transmembrane proteins (UgpA and UgpE) and a solute-binding protein (UgpB).</text>
</comment>
<comment type="subcellular location">
    <subcellularLocation>
        <location evidence="1">Cell inner membrane</location>
        <topology evidence="2">Multi-pass membrane protein</topology>
    </subcellularLocation>
</comment>
<comment type="similarity">
    <text evidence="4">Belongs to the binding-protein-dependent transport system permease family. UgpAE subfamily.</text>
</comment>
<organism>
    <name type="scientific">Shigella flexneri serotype 5b (strain 8401)</name>
    <dbReference type="NCBI Taxonomy" id="373384"/>
    <lineage>
        <taxon>Bacteria</taxon>
        <taxon>Pseudomonadati</taxon>
        <taxon>Pseudomonadota</taxon>
        <taxon>Gammaproteobacteria</taxon>
        <taxon>Enterobacterales</taxon>
        <taxon>Enterobacteriaceae</taxon>
        <taxon>Shigella</taxon>
    </lineage>
</organism>
<reference key="1">
    <citation type="journal article" date="2006" name="BMC Genomics">
        <title>Complete genome sequence of Shigella flexneri 5b and comparison with Shigella flexneri 2a.</title>
        <authorList>
            <person name="Nie H."/>
            <person name="Yang F."/>
            <person name="Zhang X."/>
            <person name="Yang J."/>
            <person name="Chen L."/>
            <person name="Wang J."/>
            <person name="Xiong Z."/>
            <person name="Peng J."/>
            <person name="Sun L."/>
            <person name="Dong J."/>
            <person name="Xue Y."/>
            <person name="Xu X."/>
            <person name="Chen S."/>
            <person name="Yao Z."/>
            <person name="Shen Y."/>
            <person name="Jin Q."/>
        </authorList>
    </citation>
    <scope>NUCLEOTIDE SEQUENCE [LARGE SCALE GENOMIC DNA]</scope>
    <source>
        <strain>8401</strain>
    </source>
</reference>
<accession>Q0SZM1</accession>
<keyword id="KW-0997">Cell inner membrane</keyword>
<keyword id="KW-1003">Cell membrane</keyword>
<keyword id="KW-0472">Membrane</keyword>
<keyword id="KW-0812">Transmembrane</keyword>
<keyword id="KW-1133">Transmembrane helix</keyword>
<keyword id="KW-0813">Transport</keyword>
<dbReference type="EMBL" id="CP000266">
    <property type="protein sequence ID" value="ABF05494.1"/>
    <property type="molecule type" value="Genomic_DNA"/>
</dbReference>
<dbReference type="RefSeq" id="WP_000572160.1">
    <property type="nucleotide sequence ID" value="NC_008258.1"/>
</dbReference>
<dbReference type="SMR" id="Q0SZM1"/>
<dbReference type="KEGG" id="sfv:SFV_3454"/>
<dbReference type="HOGENOM" id="CLU_016047_1_1_6"/>
<dbReference type="Proteomes" id="UP000000659">
    <property type="component" value="Chromosome"/>
</dbReference>
<dbReference type="GO" id="GO:0005886">
    <property type="term" value="C:plasma membrane"/>
    <property type="evidence" value="ECO:0007669"/>
    <property type="project" value="UniProtKB-SubCell"/>
</dbReference>
<dbReference type="GO" id="GO:0055085">
    <property type="term" value="P:transmembrane transport"/>
    <property type="evidence" value="ECO:0007669"/>
    <property type="project" value="InterPro"/>
</dbReference>
<dbReference type="CDD" id="cd06261">
    <property type="entry name" value="TM_PBP2"/>
    <property type="match status" value="1"/>
</dbReference>
<dbReference type="FunFam" id="1.10.3720.10:FF:000042">
    <property type="entry name" value="sn-glycerol-3-phosphate transport system permease protein UgpE"/>
    <property type="match status" value="1"/>
</dbReference>
<dbReference type="Gene3D" id="1.10.3720.10">
    <property type="entry name" value="MetI-like"/>
    <property type="match status" value="1"/>
</dbReference>
<dbReference type="InterPro" id="IPR000515">
    <property type="entry name" value="MetI-like"/>
</dbReference>
<dbReference type="InterPro" id="IPR035906">
    <property type="entry name" value="MetI-like_sf"/>
</dbReference>
<dbReference type="NCBIfam" id="NF008210">
    <property type="entry name" value="PRK10973.1"/>
    <property type="match status" value="1"/>
</dbReference>
<dbReference type="PANTHER" id="PTHR43744">
    <property type="entry name" value="ABC TRANSPORTER PERMEASE PROTEIN MG189-RELATED-RELATED"/>
    <property type="match status" value="1"/>
</dbReference>
<dbReference type="PANTHER" id="PTHR43744:SF8">
    <property type="entry name" value="SN-GLYCEROL-3-PHOSPHATE TRANSPORT SYSTEM PERMEASE PROTEIN UGPE"/>
    <property type="match status" value="1"/>
</dbReference>
<dbReference type="Pfam" id="PF00528">
    <property type="entry name" value="BPD_transp_1"/>
    <property type="match status" value="1"/>
</dbReference>
<dbReference type="SUPFAM" id="SSF161098">
    <property type="entry name" value="MetI-like"/>
    <property type="match status" value="1"/>
</dbReference>
<dbReference type="PROSITE" id="PS50928">
    <property type="entry name" value="ABC_TM1"/>
    <property type="match status" value="1"/>
</dbReference>
<protein>
    <recommendedName>
        <fullName evidence="1">sn-glycerol-3-phosphate transport system permease protein UgpE</fullName>
    </recommendedName>
</protein>
<proteinExistence type="inferred from homology"/>
<gene>
    <name type="primary">ugpE</name>
    <name type="ordered locus">SFV_3454</name>
</gene>
<sequence>MIENRPWLTIFSHTMLILGIAVILFPLYVAFVAATLDKQAVYAAPMTLIPGTHLLENIHNIWVNGVGTNSAPFWRMLLNSFVMAFSITLGKITVSMLSAFAIVWFRFPLRNLFFWMIFITLMLPVEVRIFPTVEVIANLKMLDSYAGLTLPLMASAIATFLFRQFFMTLPDELVEAARIDGASPMRFFCDIVFPLSKTNLAALFVITFIYGWNQYLWPLLIITDVDLGTTVAGIKGMIATGEGTTEWNSVMAAMLLTLIPPVVIVLVMQRAFVRGLVDSEK</sequence>
<name>UGPE_SHIF8</name>